<dbReference type="EC" id="2.4.2.4" evidence="1"/>
<dbReference type="EMBL" id="CP000547">
    <property type="protein sequence ID" value="ABO01892.1"/>
    <property type="molecule type" value="Genomic_DNA"/>
</dbReference>
<dbReference type="RefSeq" id="WP_004188257.1">
    <property type="nucleotide sequence ID" value="NZ_CP007801.1"/>
</dbReference>
<dbReference type="SMR" id="A3MAQ6"/>
<dbReference type="GeneID" id="93064188"/>
<dbReference type="KEGG" id="bmaz:BM44_3554"/>
<dbReference type="KEGG" id="bmn:BMA10247_A0136"/>
<dbReference type="PATRIC" id="fig|320389.8.peg.4008"/>
<dbReference type="UniPathway" id="UPA00578">
    <property type="reaction ID" value="UER00638"/>
</dbReference>
<dbReference type="GO" id="GO:0005829">
    <property type="term" value="C:cytosol"/>
    <property type="evidence" value="ECO:0007669"/>
    <property type="project" value="TreeGrafter"/>
</dbReference>
<dbReference type="GO" id="GO:0004645">
    <property type="term" value="F:1,4-alpha-oligoglucan phosphorylase activity"/>
    <property type="evidence" value="ECO:0007669"/>
    <property type="project" value="InterPro"/>
</dbReference>
<dbReference type="GO" id="GO:0009032">
    <property type="term" value="F:thymidine phosphorylase activity"/>
    <property type="evidence" value="ECO:0007669"/>
    <property type="project" value="UniProtKB-UniRule"/>
</dbReference>
<dbReference type="GO" id="GO:0006206">
    <property type="term" value="P:pyrimidine nucleobase metabolic process"/>
    <property type="evidence" value="ECO:0007669"/>
    <property type="project" value="InterPro"/>
</dbReference>
<dbReference type="GO" id="GO:0046104">
    <property type="term" value="P:thymidine metabolic process"/>
    <property type="evidence" value="ECO:0007669"/>
    <property type="project" value="UniProtKB-UniRule"/>
</dbReference>
<dbReference type="FunFam" id="3.40.1030.10:FF:000001">
    <property type="entry name" value="Thymidine phosphorylase"/>
    <property type="match status" value="1"/>
</dbReference>
<dbReference type="Gene3D" id="3.40.1030.10">
    <property type="entry name" value="Nucleoside phosphorylase/phosphoribosyltransferase catalytic domain"/>
    <property type="match status" value="1"/>
</dbReference>
<dbReference type="Gene3D" id="3.90.1170.30">
    <property type="entry name" value="Pyrimidine nucleoside phosphorylase-like, C-terminal domain"/>
    <property type="match status" value="1"/>
</dbReference>
<dbReference type="Gene3D" id="1.20.970.10">
    <property type="entry name" value="Transferase, Pyrimidine Nucleoside Phosphorylase, Chain C"/>
    <property type="match status" value="1"/>
</dbReference>
<dbReference type="HAMAP" id="MF_01628">
    <property type="entry name" value="Thymid_phosp"/>
    <property type="match status" value="1"/>
</dbReference>
<dbReference type="InterPro" id="IPR000312">
    <property type="entry name" value="Glycosyl_Trfase_fam3"/>
</dbReference>
<dbReference type="InterPro" id="IPR017459">
    <property type="entry name" value="Glycosyl_Trfase_fam3_N_dom"/>
</dbReference>
<dbReference type="InterPro" id="IPR036320">
    <property type="entry name" value="Glycosyl_Trfase_fam3_N_dom_sf"/>
</dbReference>
<dbReference type="InterPro" id="IPR035902">
    <property type="entry name" value="Nuc_phospho_transferase"/>
</dbReference>
<dbReference type="InterPro" id="IPR036566">
    <property type="entry name" value="PYNP-like_C_sf"/>
</dbReference>
<dbReference type="InterPro" id="IPR013102">
    <property type="entry name" value="PYNP_C"/>
</dbReference>
<dbReference type="InterPro" id="IPR018090">
    <property type="entry name" value="Pyrmidine_PPas_bac/euk"/>
</dbReference>
<dbReference type="InterPro" id="IPR017872">
    <property type="entry name" value="Pyrmidine_PPase_CS"/>
</dbReference>
<dbReference type="InterPro" id="IPR000053">
    <property type="entry name" value="Thymidine/pyrmidine_PPase"/>
</dbReference>
<dbReference type="InterPro" id="IPR013465">
    <property type="entry name" value="Thymidine_Pase"/>
</dbReference>
<dbReference type="NCBIfam" id="NF004490">
    <property type="entry name" value="PRK05820.1"/>
    <property type="match status" value="1"/>
</dbReference>
<dbReference type="NCBIfam" id="TIGR02643">
    <property type="entry name" value="T_phosphoryl"/>
    <property type="match status" value="1"/>
</dbReference>
<dbReference type="NCBIfam" id="TIGR02644">
    <property type="entry name" value="Y_phosphoryl"/>
    <property type="match status" value="1"/>
</dbReference>
<dbReference type="PANTHER" id="PTHR10515">
    <property type="entry name" value="THYMIDINE PHOSPHORYLASE"/>
    <property type="match status" value="1"/>
</dbReference>
<dbReference type="PANTHER" id="PTHR10515:SF0">
    <property type="entry name" value="THYMIDINE PHOSPHORYLASE"/>
    <property type="match status" value="1"/>
</dbReference>
<dbReference type="Pfam" id="PF02885">
    <property type="entry name" value="Glycos_trans_3N"/>
    <property type="match status" value="1"/>
</dbReference>
<dbReference type="Pfam" id="PF00591">
    <property type="entry name" value="Glycos_transf_3"/>
    <property type="match status" value="1"/>
</dbReference>
<dbReference type="Pfam" id="PF07831">
    <property type="entry name" value="PYNP_C"/>
    <property type="match status" value="1"/>
</dbReference>
<dbReference type="PIRSF" id="PIRSF000478">
    <property type="entry name" value="TP_PyNP"/>
    <property type="match status" value="1"/>
</dbReference>
<dbReference type="SMART" id="SM00941">
    <property type="entry name" value="PYNP_C"/>
    <property type="match status" value="1"/>
</dbReference>
<dbReference type="SUPFAM" id="SSF52418">
    <property type="entry name" value="Nucleoside phosphorylase/phosphoribosyltransferase catalytic domain"/>
    <property type="match status" value="1"/>
</dbReference>
<dbReference type="SUPFAM" id="SSF47648">
    <property type="entry name" value="Nucleoside phosphorylase/phosphoribosyltransferase N-terminal domain"/>
    <property type="match status" value="1"/>
</dbReference>
<dbReference type="SUPFAM" id="SSF54680">
    <property type="entry name" value="Pyrimidine nucleoside phosphorylase C-terminal domain"/>
    <property type="match status" value="1"/>
</dbReference>
<dbReference type="PROSITE" id="PS00647">
    <property type="entry name" value="THYMID_PHOSPHORYLASE"/>
    <property type="match status" value="1"/>
</dbReference>
<comment type="function">
    <text evidence="1">The enzymes which catalyze the reversible phosphorolysis of pyrimidine nucleosides are involved in the degradation of these compounds and in their utilization as carbon and energy sources, or in the rescue of pyrimidine bases for nucleotide synthesis.</text>
</comment>
<comment type="catalytic activity">
    <reaction evidence="1">
        <text>thymidine + phosphate = 2-deoxy-alpha-D-ribose 1-phosphate + thymine</text>
        <dbReference type="Rhea" id="RHEA:16037"/>
        <dbReference type="ChEBI" id="CHEBI:17748"/>
        <dbReference type="ChEBI" id="CHEBI:17821"/>
        <dbReference type="ChEBI" id="CHEBI:43474"/>
        <dbReference type="ChEBI" id="CHEBI:57259"/>
        <dbReference type="EC" id="2.4.2.4"/>
    </reaction>
</comment>
<comment type="pathway">
    <text evidence="1">Pyrimidine metabolism; dTMP biosynthesis via salvage pathway; dTMP from thymine: step 1/2.</text>
</comment>
<comment type="subunit">
    <text evidence="1">Homodimer.</text>
</comment>
<comment type="similarity">
    <text evidence="1">Belongs to the thymidine/pyrimidine-nucleoside phosphorylase family.</text>
</comment>
<evidence type="ECO:0000255" key="1">
    <source>
        <dbReference type="HAMAP-Rule" id="MF_01628"/>
    </source>
</evidence>
<sequence length="440" mass="45403">MTFLPQEFIRKVRDRAPLDTADVARFVQGVTAGDVTEGQIAAFAMAVYFNELPLSARIALTLAQRDSGDVLDWRGARLNGPVVDKHSTGGVGDLTSLVIGPMVAACGGYVPMISGRGLGHTGGTLDKLEAIPGYDVAPSVDMLRRVVRDAGLAIVGQTAQLAPADKRIYAVRDVTATVESISLITASILSKKLAAGVGALAMDVKVGSGAFMPSAEQSAELARSIVDVGNGAGMRTAATLTDMNQALAPCAGNAIEVRCAIDFLTGAARPARLEAVSFALAAQMLTMGGLAADAHDARRRLRAVLESGAAAERFARMVAALGGPADLVERPERHLPRAAAAAPVAAARAGWIERIDARALGLAVVGLGGGRAKIGDTLDYSVGLSALAELGERVEAGQPLATVHARDADSAAQATDAVRRAYRIGAEPPAQTRVVHAVIE</sequence>
<name>TYPH_BURM7</name>
<reference key="1">
    <citation type="journal article" date="2010" name="Genome Biol. Evol.">
        <title>Continuing evolution of Burkholderia mallei through genome reduction and large-scale rearrangements.</title>
        <authorList>
            <person name="Losada L."/>
            <person name="Ronning C.M."/>
            <person name="DeShazer D."/>
            <person name="Woods D."/>
            <person name="Fedorova N."/>
            <person name="Kim H.S."/>
            <person name="Shabalina S.A."/>
            <person name="Pearson T.R."/>
            <person name="Brinkac L."/>
            <person name="Tan P."/>
            <person name="Nandi T."/>
            <person name="Crabtree J."/>
            <person name="Badger J."/>
            <person name="Beckstrom-Sternberg S."/>
            <person name="Saqib M."/>
            <person name="Schutzer S.E."/>
            <person name="Keim P."/>
            <person name="Nierman W.C."/>
        </authorList>
    </citation>
    <scope>NUCLEOTIDE SEQUENCE [LARGE SCALE GENOMIC DNA]</scope>
    <source>
        <strain>NCTC 10247</strain>
    </source>
</reference>
<keyword id="KW-0328">Glycosyltransferase</keyword>
<keyword id="KW-0808">Transferase</keyword>
<proteinExistence type="inferred from homology"/>
<feature type="chain" id="PRO_1000069656" description="Thymidine phosphorylase">
    <location>
        <begin position="1"/>
        <end position="440"/>
    </location>
</feature>
<organism>
    <name type="scientific">Burkholderia mallei (strain NCTC 10247)</name>
    <dbReference type="NCBI Taxonomy" id="320389"/>
    <lineage>
        <taxon>Bacteria</taxon>
        <taxon>Pseudomonadati</taxon>
        <taxon>Pseudomonadota</taxon>
        <taxon>Betaproteobacteria</taxon>
        <taxon>Burkholderiales</taxon>
        <taxon>Burkholderiaceae</taxon>
        <taxon>Burkholderia</taxon>
        <taxon>pseudomallei group</taxon>
    </lineage>
</organism>
<gene>
    <name evidence="1" type="primary">deoA</name>
    <name type="ordered locus">BMA10247_A0136</name>
</gene>
<accession>A3MAQ6</accession>
<protein>
    <recommendedName>
        <fullName evidence="1">Thymidine phosphorylase</fullName>
        <ecNumber evidence="1">2.4.2.4</ecNumber>
    </recommendedName>
    <alternativeName>
        <fullName evidence="1">TdRPase</fullName>
    </alternativeName>
</protein>